<dbReference type="EMBL" id="AL596173">
    <property type="protein sequence ID" value="CAC98003.1"/>
    <property type="molecule type" value="Genomic_DNA"/>
</dbReference>
<dbReference type="PIR" id="AC1779">
    <property type="entry name" value="AC1779"/>
</dbReference>
<dbReference type="RefSeq" id="WP_003720946.1">
    <property type="nucleotide sequence ID" value="NC_003212.1"/>
</dbReference>
<dbReference type="SMR" id="P66485"/>
<dbReference type="STRING" id="272626.gene:17567164"/>
<dbReference type="GeneID" id="93236050"/>
<dbReference type="KEGG" id="lin:rpsS"/>
<dbReference type="eggNOG" id="COG0185">
    <property type="taxonomic scope" value="Bacteria"/>
</dbReference>
<dbReference type="HOGENOM" id="CLU_144911_0_1_9"/>
<dbReference type="OrthoDB" id="9797833at2"/>
<dbReference type="Proteomes" id="UP000002513">
    <property type="component" value="Chromosome"/>
</dbReference>
<dbReference type="GO" id="GO:0005737">
    <property type="term" value="C:cytoplasm"/>
    <property type="evidence" value="ECO:0007669"/>
    <property type="project" value="UniProtKB-ARBA"/>
</dbReference>
<dbReference type="GO" id="GO:0015935">
    <property type="term" value="C:small ribosomal subunit"/>
    <property type="evidence" value="ECO:0007669"/>
    <property type="project" value="InterPro"/>
</dbReference>
<dbReference type="GO" id="GO:0019843">
    <property type="term" value="F:rRNA binding"/>
    <property type="evidence" value="ECO:0007669"/>
    <property type="project" value="UniProtKB-UniRule"/>
</dbReference>
<dbReference type="GO" id="GO:0003735">
    <property type="term" value="F:structural constituent of ribosome"/>
    <property type="evidence" value="ECO:0007669"/>
    <property type="project" value="InterPro"/>
</dbReference>
<dbReference type="GO" id="GO:0000028">
    <property type="term" value="P:ribosomal small subunit assembly"/>
    <property type="evidence" value="ECO:0007669"/>
    <property type="project" value="TreeGrafter"/>
</dbReference>
<dbReference type="GO" id="GO:0006412">
    <property type="term" value="P:translation"/>
    <property type="evidence" value="ECO:0007669"/>
    <property type="project" value="UniProtKB-UniRule"/>
</dbReference>
<dbReference type="FunFam" id="3.30.860.10:FF:000001">
    <property type="entry name" value="30S ribosomal protein S19"/>
    <property type="match status" value="1"/>
</dbReference>
<dbReference type="Gene3D" id="3.30.860.10">
    <property type="entry name" value="30s Ribosomal Protein S19, Chain A"/>
    <property type="match status" value="1"/>
</dbReference>
<dbReference type="HAMAP" id="MF_00531">
    <property type="entry name" value="Ribosomal_uS19"/>
    <property type="match status" value="1"/>
</dbReference>
<dbReference type="InterPro" id="IPR002222">
    <property type="entry name" value="Ribosomal_uS19"/>
</dbReference>
<dbReference type="InterPro" id="IPR005732">
    <property type="entry name" value="Ribosomal_uS19_bac-type"/>
</dbReference>
<dbReference type="InterPro" id="IPR020934">
    <property type="entry name" value="Ribosomal_uS19_CS"/>
</dbReference>
<dbReference type="InterPro" id="IPR023575">
    <property type="entry name" value="Ribosomal_uS19_SF"/>
</dbReference>
<dbReference type="NCBIfam" id="TIGR01050">
    <property type="entry name" value="rpsS_bact"/>
    <property type="match status" value="1"/>
</dbReference>
<dbReference type="PANTHER" id="PTHR11880">
    <property type="entry name" value="RIBOSOMAL PROTEIN S19P FAMILY MEMBER"/>
    <property type="match status" value="1"/>
</dbReference>
<dbReference type="PANTHER" id="PTHR11880:SF8">
    <property type="entry name" value="SMALL RIBOSOMAL SUBUNIT PROTEIN US19M"/>
    <property type="match status" value="1"/>
</dbReference>
<dbReference type="Pfam" id="PF00203">
    <property type="entry name" value="Ribosomal_S19"/>
    <property type="match status" value="1"/>
</dbReference>
<dbReference type="PIRSF" id="PIRSF002144">
    <property type="entry name" value="Ribosomal_S19"/>
    <property type="match status" value="1"/>
</dbReference>
<dbReference type="PRINTS" id="PR00975">
    <property type="entry name" value="RIBOSOMALS19"/>
</dbReference>
<dbReference type="SUPFAM" id="SSF54570">
    <property type="entry name" value="Ribosomal protein S19"/>
    <property type="match status" value="1"/>
</dbReference>
<dbReference type="PROSITE" id="PS00323">
    <property type="entry name" value="RIBOSOMAL_S19"/>
    <property type="match status" value="1"/>
</dbReference>
<protein>
    <recommendedName>
        <fullName evidence="1">Small ribosomal subunit protein uS19</fullName>
    </recommendedName>
    <alternativeName>
        <fullName evidence="2">30S ribosomal protein S19</fullName>
    </alternativeName>
</protein>
<gene>
    <name evidence="1" type="primary">rpsS</name>
    <name type="ordered locus">lin2777</name>
</gene>
<proteinExistence type="inferred from homology"/>
<sequence>MGRSLKKGPFVDDHLMKKVEAAAESEKKQVIKTWSRRSTIFPTFVGQTIAVYDGRKHVPVYVQEDMVGHKLGEFAPTRTYRGHAGDDKKTKR</sequence>
<reference key="1">
    <citation type="journal article" date="2001" name="Science">
        <title>Comparative genomics of Listeria species.</title>
        <authorList>
            <person name="Glaser P."/>
            <person name="Frangeul L."/>
            <person name="Buchrieser C."/>
            <person name="Rusniok C."/>
            <person name="Amend A."/>
            <person name="Baquero F."/>
            <person name="Berche P."/>
            <person name="Bloecker H."/>
            <person name="Brandt P."/>
            <person name="Chakraborty T."/>
            <person name="Charbit A."/>
            <person name="Chetouani F."/>
            <person name="Couve E."/>
            <person name="de Daruvar A."/>
            <person name="Dehoux P."/>
            <person name="Domann E."/>
            <person name="Dominguez-Bernal G."/>
            <person name="Duchaud E."/>
            <person name="Durant L."/>
            <person name="Dussurget O."/>
            <person name="Entian K.-D."/>
            <person name="Fsihi H."/>
            <person name="Garcia-del Portillo F."/>
            <person name="Garrido P."/>
            <person name="Gautier L."/>
            <person name="Goebel W."/>
            <person name="Gomez-Lopez N."/>
            <person name="Hain T."/>
            <person name="Hauf J."/>
            <person name="Jackson D."/>
            <person name="Jones L.-M."/>
            <person name="Kaerst U."/>
            <person name="Kreft J."/>
            <person name="Kuhn M."/>
            <person name="Kunst F."/>
            <person name="Kurapkat G."/>
            <person name="Madueno E."/>
            <person name="Maitournam A."/>
            <person name="Mata Vicente J."/>
            <person name="Ng E."/>
            <person name="Nedjari H."/>
            <person name="Nordsiek G."/>
            <person name="Novella S."/>
            <person name="de Pablos B."/>
            <person name="Perez-Diaz J.-C."/>
            <person name="Purcell R."/>
            <person name="Remmel B."/>
            <person name="Rose M."/>
            <person name="Schlueter T."/>
            <person name="Simoes N."/>
            <person name="Tierrez A."/>
            <person name="Vazquez-Boland J.-A."/>
            <person name="Voss H."/>
            <person name="Wehland J."/>
            <person name="Cossart P."/>
        </authorList>
    </citation>
    <scope>NUCLEOTIDE SEQUENCE [LARGE SCALE GENOMIC DNA]</scope>
    <source>
        <strain>ATCC BAA-680 / CLIP 11262</strain>
    </source>
</reference>
<keyword id="KW-0687">Ribonucleoprotein</keyword>
<keyword id="KW-0689">Ribosomal protein</keyword>
<keyword id="KW-0694">RNA-binding</keyword>
<keyword id="KW-0699">rRNA-binding</keyword>
<feature type="chain" id="PRO_0000129846" description="Small ribosomal subunit protein uS19">
    <location>
        <begin position="1"/>
        <end position="92"/>
    </location>
</feature>
<name>RS19_LISIN</name>
<evidence type="ECO:0000255" key="1">
    <source>
        <dbReference type="HAMAP-Rule" id="MF_00531"/>
    </source>
</evidence>
<evidence type="ECO:0000305" key="2"/>
<accession>P66485</accession>
<accession>Q8Y442</accession>
<accession>Q927L1</accession>
<comment type="function">
    <text evidence="1">Protein S19 forms a complex with S13 that binds strongly to the 16S ribosomal RNA.</text>
</comment>
<comment type="similarity">
    <text evidence="1">Belongs to the universal ribosomal protein uS19 family.</text>
</comment>
<organism>
    <name type="scientific">Listeria innocua serovar 6a (strain ATCC BAA-680 / CLIP 11262)</name>
    <dbReference type="NCBI Taxonomy" id="272626"/>
    <lineage>
        <taxon>Bacteria</taxon>
        <taxon>Bacillati</taxon>
        <taxon>Bacillota</taxon>
        <taxon>Bacilli</taxon>
        <taxon>Bacillales</taxon>
        <taxon>Listeriaceae</taxon>
        <taxon>Listeria</taxon>
    </lineage>
</organism>